<name>RPOB_STRP1</name>
<sequence>MAGHEVRYGKHRTRRSFSRIKEVLDLPNLIEIQTDSFQDFLDSGLKEVFEDVLPISNFTDTMELEFVGYEFKEPKYTLEEARIHDASYSAPIFVTFRLVNKETGEIKTQEVFFGDFPIMTEMGTFIINGGERIIVSQLVRSPGVYFNDKVDKNGKVGYGSTVIPNRGAWLELETDSKDIAYTRIDRTRKIPFTTLVRALGFSGDDEIVDIFGESDLVRNTIEKDIHKNPSDSRTDEALKEIYERLRPGEPKTADSSRSLLIARFFDARRYDLAAVGRYKVNKKLNIKTRLLNQIIAENLVDAETGEILVEAGTEMTRSVIESIEEHLDGDLNKFVYTPNDYAVVTEPVVLQKFKVVSPIDPDRVVTIVGNANPDDKVRALTPADILAEMSYFLNLAEGLGKVDDIDHLGNRRIRAVGELLANQFRIGLARMERNVRERMSVQDNDVLTPQQIINIRPVTAAVKEFFGSSQLSQFMDQHNPLSELSHKRRLSALGPGGLTRDRAGYEVRDVHYTHYGRMCPIETPEGPNIGLINNLSSFGHLNKYGFIQTPYRKVDRATGTVTNEIVWLTADEEDEYTVAQANSKLNEDGTFAEEIVMGRHQGNNQEFSASVVDFVDVSPKQVVAVATACIPFLENDDSNRALMGANMQRQAVPLIDPKAPYVGTGMEYQAAHDSGAAVIAQQNGKVVFSDAEKVEIRRQDGSLDVYHITKFRRSNSGTAYNQRTLVKVGDIVEKGDFIADGPSMENGEMALGQNPVVAYMTWEGYNFEDAVIMSERLVKEDVYTSVHLEEFESETRDTKLGPEEITREIPNVGEEALKDLDEMGIIRIGAEVKEGDILVGKVTPKGEKDLSAEERLLHAIFGDKSREVRDTSLRVPHGGDGIVRDVKIFTRANGDELQSGVNMLVRVYIAQKRKIKVGDKMAGRHGNKGVVSRIVPVEDMPYLPDGTPVDIMLNPLGVPSRMNIGQVMELHLGMAARNLGIHIATPVFDGASSEDLWDTVREAGMDSDAKTVLYDGRTGEPFDNRVSVGVMYMIKLHHMVDDKLHARSVGPYSLVTQQPLGGKAQFGGQRFGEMEVWALEAYGASNVLQEILTYKSDDVTGRLKAYEAITKGKPIPKPGVPESFRVLVKELQSLGLDMRVLDEDDNEVELRDLDEGEDDDIMHVDDLEKAREKQAQETQEVSETTDEK</sequence>
<accession>Q9A1U1</accession>
<accession>Q491L6</accession>
<comment type="function">
    <text evidence="1">DNA-dependent RNA polymerase catalyzes the transcription of DNA into RNA using the four ribonucleoside triphosphates as substrates.</text>
</comment>
<comment type="catalytic activity">
    <reaction evidence="1">
        <text>RNA(n) + a ribonucleoside 5'-triphosphate = RNA(n+1) + diphosphate</text>
        <dbReference type="Rhea" id="RHEA:21248"/>
        <dbReference type="Rhea" id="RHEA-COMP:14527"/>
        <dbReference type="Rhea" id="RHEA-COMP:17342"/>
        <dbReference type="ChEBI" id="CHEBI:33019"/>
        <dbReference type="ChEBI" id="CHEBI:61557"/>
        <dbReference type="ChEBI" id="CHEBI:140395"/>
        <dbReference type="EC" id="2.7.7.6"/>
    </reaction>
</comment>
<comment type="subunit">
    <text evidence="1">The RNAP catalytic core consists of 2 alpha, 1 beta, 1 beta' and 1 omega subunit. When a sigma factor is associated with the core the holoenzyme is formed, which can initiate transcription.</text>
</comment>
<comment type="similarity">
    <text evidence="1">Belongs to the RNA polymerase beta chain family.</text>
</comment>
<feature type="chain" id="PRO_0000047976" description="DNA-directed RNA polymerase subunit beta">
    <location>
        <begin position="1"/>
        <end position="1188"/>
    </location>
</feature>
<dbReference type="EC" id="2.7.7.6" evidence="1"/>
<dbReference type="EMBL" id="AE004092">
    <property type="protein sequence ID" value="AAK33216.1"/>
    <property type="molecule type" value="Genomic_DNA"/>
</dbReference>
<dbReference type="EMBL" id="CP000017">
    <property type="protein sequence ID" value="AAZ50702.1"/>
    <property type="molecule type" value="Genomic_DNA"/>
</dbReference>
<dbReference type="RefSeq" id="NP_268495.1">
    <property type="nucleotide sequence ID" value="NC_002737.2"/>
</dbReference>
<dbReference type="SMR" id="Q9A1U1"/>
<dbReference type="PaxDb" id="1314-HKU360_00130"/>
<dbReference type="KEGG" id="spy:SPy_0098"/>
<dbReference type="KEGG" id="spz:M5005_Spy0083"/>
<dbReference type="PATRIC" id="fig|160490.10.peg.83"/>
<dbReference type="HOGENOM" id="CLU_000524_4_1_9"/>
<dbReference type="OMA" id="FMTWEGY"/>
<dbReference type="Proteomes" id="UP000000750">
    <property type="component" value="Chromosome"/>
</dbReference>
<dbReference type="GO" id="GO:0000428">
    <property type="term" value="C:DNA-directed RNA polymerase complex"/>
    <property type="evidence" value="ECO:0007669"/>
    <property type="project" value="UniProtKB-KW"/>
</dbReference>
<dbReference type="GO" id="GO:0003677">
    <property type="term" value="F:DNA binding"/>
    <property type="evidence" value="ECO:0007669"/>
    <property type="project" value="UniProtKB-UniRule"/>
</dbReference>
<dbReference type="GO" id="GO:0003899">
    <property type="term" value="F:DNA-directed RNA polymerase activity"/>
    <property type="evidence" value="ECO:0007669"/>
    <property type="project" value="UniProtKB-UniRule"/>
</dbReference>
<dbReference type="GO" id="GO:0032549">
    <property type="term" value="F:ribonucleoside binding"/>
    <property type="evidence" value="ECO:0007669"/>
    <property type="project" value="InterPro"/>
</dbReference>
<dbReference type="GO" id="GO:0006351">
    <property type="term" value="P:DNA-templated transcription"/>
    <property type="evidence" value="ECO:0007669"/>
    <property type="project" value="UniProtKB-UniRule"/>
</dbReference>
<dbReference type="CDD" id="cd00653">
    <property type="entry name" value="RNA_pol_B_RPB2"/>
    <property type="match status" value="1"/>
</dbReference>
<dbReference type="Gene3D" id="2.40.50.100">
    <property type="match status" value="1"/>
</dbReference>
<dbReference type="Gene3D" id="2.40.50.150">
    <property type="match status" value="1"/>
</dbReference>
<dbReference type="Gene3D" id="3.90.1100.10">
    <property type="match status" value="2"/>
</dbReference>
<dbReference type="Gene3D" id="2.30.150.10">
    <property type="entry name" value="DNA-directed RNA polymerase, beta subunit, external 1 domain"/>
    <property type="match status" value="1"/>
</dbReference>
<dbReference type="Gene3D" id="2.40.270.10">
    <property type="entry name" value="DNA-directed RNA polymerase, subunit 2, domain 6"/>
    <property type="match status" value="2"/>
</dbReference>
<dbReference type="Gene3D" id="3.90.1800.10">
    <property type="entry name" value="RNA polymerase alpha subunit dimerisation domain"/>
    <property type="match status" value="1"/>
</dbReference>
<dbReference type="Gene3D" id="3.90.1110.10">
    <property type="entry name" value="RNA polymerase Rpb2, domain 2"/>
    <property type="match status" value="2"/>
</dbReference>
<dbReference type="HAMAP" id="MF_01321">
    <property type="entry name" value="RNApol_bact_RpoB"/>
    <property type="match status" value="1"/>
</dbReference>
<dbReference type="InterPro" id="IPR042107">
    <property type="entry name" value="DNA-dir_RNA_pol_bsu_ext_1_sf"/>
</dbReference>
<dbReference type="InterPro" id="IPR019462">
    <property type="entry name" value="DNA-dir_RNA_pol_bsu_external_1"/>
</dbReference>
<dbReference type="InterPro" id="IPR015712">
    <property type="entry name" value="DNA-dir_RNA_pol_su2"/>
</dbReference>
<dbReference type="InterPro" id="IPR007120">
    <property type="entry name" value="DNA-dir_RNAP_su2_dom"/>
</dbReference>
<dbReference type="InterPro" id="IPR037033">
    <property type="entry name" value="DNA-dir_RNAP_su2_hyb_sf"/>
</dbReference>
<dbReference type="InterPro" id="IPR010243">
    <property type="entry name" value="RNA_pol_bsu_bac"/>
</dbReference>
<dbReference type="InterPro" id="IPR007121">
    <property type="entry name" value="RNA_pol_bsu_CS"/>
</dbReference>
<dbReference type="InterPro" id="IPR007644">
    <property type="entry name" value="RNA_pol_bsu_protrusion"/>
</dbReference>
<dbReference type="InterPro" id="IPR007642">
    <property type="entry name" value="RNA_pol_Rpb2_2"/>
</dbReference>
<dbReference type="InterPro" id="IPR037034">
    <property type="entry name" value="RNA_pol_Rpb2_2_sf"/>
</dbReference>
<dbReference type="InterPro" id="IPR007645">
    <property type="entry name" value="RNA_pol_Rpb2_3"/>
</dbReference>
<dbReference type="InterPro" id="IPR007641">
    <property type="entry name" value="RNA_pol_Rpb2_7"/>
</dbReference>
<dbReference type="InterPro" id="IPR014724">
    <property type="entry name" value="RNA_pol_RPB2_OB-fold"/>
</dbReference>
<dbReference type="NCBIfam" id="NF001616">
    <property type="entry name" value="PRK00405.1"/>
    <property type="match status" value="1"/>
</dbReference>
<dbReference type="NCBIfam" id="TIGR02013">
    <property type="entry name" value="rpoB"/>
    <property type="match status" value="1"/>
</dbReference>
<dbReference type="PANTHER" id="PTHR20856">
    <property type="entry name" value="DNA-DIRECTED RNA POLYMERASE I SUBUNIT 2"/>
    <property type="match status" value="1"/>
</dbReference>
<dbReference type="Pfam" id="PF04563">
    <property type="entry name" value="RNA_pol_Rpb2_1"/>
    <property type="match status" value="1"/>
</dbReference>
<dbReference type="Pfam" id="PF04561">
    <property type="entry name" value="RNA_pol_Rpb2_2"/>
    <property type="match status" value="2"/>
</dbReference>
<dbReference type="Pfam" id="PF04565">
    <property type="entry name" value="RNA_pol_Rpb2_3"/>
    <property type="match status" value="1"/>
</dbReference>
<dbReference type="Pfam" id="PF10385">
    <property type="entry name" value="RNA_pol_Rpb2_45"/>
    <property type="match status" value="1"/>
</dbReference>
<dbReference type="Pfam" id="PF00562">
    <property type="entry name" value="RNA_pol_Rpb2_6"/>
    <property type="match status" value="1"/>
</dbReference>
<dbReference type="Pfam" id="PF04560">
    <property type="entry name" value="RNA_pol_Rpb2_7"/>
    <property type="match status" value="1"/>
</dbReference>
<dbReference type="SUPFAM" id="SSF64484">
    <property type="entry name" value="beta and beta-prime subunits of DNA dependent RNA-polymerase"/>
    <property type="match status" value="1"/>
</dbReference>
<dbReference type="PROSITE" id="PS01166">
    <property type="entry name" value="RNA_POL_BETA"/>
    <property type="match status" value="1"/>
</dbReference>
<reference key="1">
    <citation type="journal article" date="2001" name="Proc. Natl. Acad. Sci. U.S.A.">
        <title>Complete genome sequence of an M1 strain of Streptococcus pyogenes.</title>
        <authorList>
            <person name="Ferretti J.J."/>
            <person name="McShan W.M."/>
            <person name="Ajdic D.J."/>
            <person name="Savic D.J."/>
            <person name="Savic G."/>
            <person name="Lyon K."/>
            <person name="Primeaux C."/>
            <person name="Sezate S."/>
            <person name="Suvorov A.N."/>
            <person name="Kenton S."/>
            <person name="Lai H.S."/>
            <person name="Lin S.P."/>
            <person name="Qian Y."/>
            <person name="Jia H.G."/>
            <person name="Najar F.Z."/>
            <person name="Ren Q."/>
            <person name="Zhu H."/>
            <person name="Song L."/>
            <person name="White J."/>
            <person name="Yuan X."/>
            <person name="Clifton S.W."/>
            <person name="Roe B.A."/>
            <person name="McLaughlin R.E."/>
        </authorList>
    </citation>
    <scope>NUCLEOTIDE SEQUENCE [LARGE SCALE GENOMIC DNA]</scope>
    <source>
        <strain>ATCC 700294 / SF370 / Serotype M1</strain>
    </source>
</reference>
<reference key="2">
    <citation type="journal article" date="2005" name="J. Infect. Dis.">
        <title>Evolutionary origin and emergence of a highly successful clone of serotype M1 group A Streptococcus involved multiple horizontal gene transfer events.</title>
        <authorList>
            <person name="Sumby P."/>
            <person name="Porcella S.F."/>
            <person name="Madrigal A.G."/>
            <person name="Barbian K.D."/>
            <person name="Virtaneva K."/>
            <person name="Ricklefs S.M."/>
            <person name="Sturdevant D.E."/>
            <person name="Graham M.R."/>
            <person name="Vuopio-Varkila J."/>
            <person name="Hoe N.P."/>
            <person name="Musser J.M."/>
        </authorList>
    </citation>
    <scope>NUCLEOTIDE SEQUENCE [LARGE SCALE GENOMIC DNA]</scope>
    <source>
        <strain>ATCC BAA-947 / MGAS5005 / Serotype M1</strain>
    </source>
</reference>
<evidence type="ECO:0000255" key="1">
    <source>
        <dbReference type="HAMAP-Rule" id="MF_01321"/>
    </source>
</evidence>
<proteinExistence type="inferred from homology"/>
<gene>
    <name evidence="1" type="primary">rpoB</name>
    <name type="ordered locus">SPy_0098</name>
    <name type="ordered locus">M5005_Spy0083</name>
</gene>
<keyword id="KW-0240">DNA-directed RNA polymerase</keyword>
<keyword id="KW-0548">Nucleotidyltransferase</keyword>
<keyword id="KW-1185">Reference proteome</keyword>
<keyword id="KW-0804">Transcription</keyword>
<keyword id="KW-0808">Transferase</keyword>
<organism>
    <name type="scientific">Streptococcus pyogenes serotype M1</name>
    <dbReference type="NCBI Taxonomy" id="301447"/>
    <lineage>
        <taxon>Bacteria</taxon>
        <taxon>Bacillati</taxon>
        <taxon>Bacillota</taxon>
        <taxon>Bacilli</taxon>
        <taxon>Lactobacillales</taxon>
        <taxon>Streptococcaceae</taxon>
        <taxon>Streptococcus</taxon>
    </lineage>
</organism>
<protein>
    <recommendedName>
        <fullName evidence="1">DNA-directed RNA polymerase subunit beta</fullName>
        <shortName evidence="1">RNAP subunit beta</shortName>
        <ecNumber evidence="1">2.7.7.6</ecNumber>
    </recommendedName>
    <alternativeName>
        <fullName evidence="1">RNA polymerase subunit beta</fullName>
    </alternativeName>
    <alternativeName>
        <fullName evidence="1">Transcriptase subunit beta</fullName>
    </alternativeName>
</protein>